<protein>
    <recommendedName>
        <fullName evidence="1">2,3-bisphosphoglycerate-independent phosphoglycerate mutase</fullName>
        <shortName evidence="1">BPG-independent PGAM</shortName>
        <shortName evidence="1">Phosphoglyceromutase</shortName>
        <shortName evidence="1">iPGM</shortName>
        <ecNumber evidence="1">5.4.2.12</ecNumber>
    </recommendedName>
</protein>
<proteinExistence type="inferred from homology"/>
<keyword id="KW-0324">Glycolysis</keyword>
<keyword id="KW-0413">Isomerase</keyword>
<keyword id="KW-0464">Manganese</keyword>
<keyword id="KW-0479">Metal-binding</keyword>
<keyword id="KW-1185">Reference proteome</keyword>
<reference key="1">
    <citation type="journal article" date="2004" name="Proc. Natl. Acad. Sci. U.S.A.">
        <title>Genome sequence of the deep-sea gamma-proteobacterium Idiomarina loihiensis reveals amino acid fermentation as a source of carbon and energy.</title>
        <authorList>
            <person name="Hou S."/>
            <person name="Saw J.H."/>
            <person name="Lee K.S."/>
            <person name="Freitas T.A."/>
            <person name="Belisle C."/>
            <person name="Kawarabayasi Y."/>
            <person name="Donachie S.P."/>
            <person name="Pikina A."/>
            <person name="Galperin M.Y."/>
            <person name="Koonin E.V."/>
            <person name="Makarova K.S."/>
            <person name="Omelchenko M.V."/>
            <person name="Sorokin A."/>
            <person name="Wolf Y.I."/>
            <person name="Li Q.X."/>
            <person name="Keum Y.S."/>
            <person name="Campbell S."/>
            <person name="Denery J."/>
            <person name="Aizawa S."/>
            <person name="Shibata S."/>
            <person name="Malahoff A."/>
            <person name="Alam M."/>
        </authorList>
    </citation>
    <scope>NUCLEOTIDE SEQUENCE [LARGE SCALE GENOMIC DNA]</scope>
    <source>
        <strain>ATCC BAA-735 / DSM 15497 / L2-TR</strain>
    </source>
</reference>
<evidence type="ECO:0000255" key="1">
    <source>
        <dbReference type="HAMAP-Rule" id="MF_01038"/>
    </source>
</evidence>
<gene>
    <name evidence="1" type="primary">gpmI</name>
    <name type="ordered locus">IL0233</name>
</gene>
<comment type="function">
    <text evidence="1">Catalyzes the interconversion of 2-phosphoglycerate and 3-phosphoglycerate.</text>
</comment>
<comment type="catalytic activity">
    <reaction evidence="1">
        <text>(2R)-2-phosphoglycerate = (2R)-3-phosphoglycerate</text>
        <dbReference type="Rhea" id="RHEA:15901"/>
        <dbReference type="ChEBI" id="CHEBI:58272"/>
        <dbReference type="ChEBI" id="CHEBI:58289"/>
        <dbReference type="EC" id="5.4.2.12"/>
    </reaction>
</comment>
<comment type="cofactor">
    <cofactor evidence="1">
        <name>Mn(2+)</name>
        <dbReference type="ChEBI" id="CHEBI:29035"/>
    </cofactor>
    <text evidence="1">Binds 2 manganese ions per subunit.</text>
</comment>
<comment type="pathway">
    <text evidence="1">Carbohydrate degradation; glycolysis; pyruvate from D-glyceraldehyde 3-phosphate: step 3/5.</text>
</comment>
<comment type="subunit">
    <text evidence="1">Monomer.</text>
</comment>
<comment type="similarity">
    <text evidence="1">Belongs to the BPG-independent phosphoglycerate mutase family.</text>
</comment>
<sequence length="511" mass="55824">MTPTIKPLVLLILDGWGYREDAPDNAIAKANTPVMDRLWEKYPHCLVDGSGGAVGLPDGQMGNSEVGHVNLGAGRIVYQDFTRISKAISDRSFFSNTILCDALKKAKAAKGAVHIMGLLSAGGVHSHEDHLVAMIEMAVEQGAEDVYLHAFLDGRDTPPKSALPSIERFEALFARLGKGRFATLSGRFFAMDRDKRWERIEQSYKAVYHGLSGVTSANATDAVENAYERGETDEFVTPVVIGQPAPIANGDSVFFMNFRADRAREMTQAFVDKDFDGFDRGSRADISEFVMLTQYADTLEAPSAFPPEPLNNVLGEWLAKHDKTQLRISETEKYAHVTFFFSGGREQEFEGEKRVLIPSPKVKTYDLQPEMSSEQLTDELVAAIESQAFDVVICNYPNGDMVGHTGNFDAAVKACEAVDHSVGRVVSALEAVGGECLITADHGNAEQMSDATTGQAHTAHTNELVPFIYVGRPAKARNGRLSDVAPTILHLIGMEQPDEMTGTSLMTLEQD</sequence>
<dbReference type="EC" id="5.4.2.12" evidence="1"/>
<dbReference type="EMBL" id="AE017340">
    <property type="protein sequence ID" value="AAV81076.1"/>
    <property type="molecule type" value="Genomic_DNA"/>
</dbReference>
<dbReference type="RefSeq" id="WP_011233496.1">
    <property type="nucleotide sequence ID" value="NC_006512.1"/>
</dbReference>
<dbReference type="SMR" id="Q5QZA9"/>
<dbReference type="STRING" id="283942.IL0233"/>
<dbReference type="GeneID" id="41335379"/>
<dbReference type="KEGG" id="ilo:IL0233"/>
<dbReference type="eggNOG" id="COG0696">
    <property type="taxonomic scope" value="Bacteria"/>
</dbReference>
<dbReference type="HOGENOM" id="CLU_026099_2_0_6"/>
<dbReference type="OrthoDB" id="9800863at2"/>
<dbReference type="UniPathway" id="UPA00109">
    <property type="reaction ID" value="UER00186"/>
</dbReference>
<dbReference type="Proteomes" id="UP000001171">
    <property type="component" value="Chromosome"/>
</dbReference>
<dbReference type="GO" id="GO:0005829">
    <property type="term" value="C:cytosol"/>
    <property type="evidence" value="ECO:0007669"/>
    <property type="project" value="TreeGrafter"/>
</dbReference>
<dbReference type="GO" id="GO:0030145">
    <property type="term" value="F:manganese ion binding"/>
    <property type="evidence" value="ECO:0007669"/>
    <property type="project" value="UniProtKB-UniRule"/>
</dbReference>
<dbReference type="GO" id="GO:0004619">
    <property type="term" value="F:phosphoglycerate mutase activity"/>
    <property type="evidence" value="ECO:0007669"/>
    <property type="project" value="UniProtKB-EC"/>
</dbReference>
<dbReference type="GO" id="GO:0006007">
    <property type="term" value="P:glucose catabolic process"/>
    <property type="evidence" value="ECO:0007669"/>
    <property type="project" value="InterPro"/>
</dbReference>
<dbReference type="GO" id="GO:0006096">
    <property type="term" value="P:glycolytic process"/>
    <property type="evidence" value="ECO:0007669"/>
    <property type="project" value="UniProtKB-UniRule"/>
</dbReference>
<dbReference type="CDD" id="cd16010">
    <property type="entry name" value="iPGM"/>
    <property type="match status" value="1"/>
</dbReference>
<dbReference type="FunFam" id="3.40.1450.10:FF:000001">
    <property type="entry name" value="2,3-bisphosphoglycerate-independent phosphoglycerate mutase"/>
    <property type="match status" value="1"/>
</dbReference>
<dbReference type="FunFam" id="3.40.720.10:FF:000001">
    <property type="entry name" value="2,3-bisphosphoglycerate-independent phosphoglycerate mutase"/>
    <property type="match status" value="1"/>
</dbReference>
<dbReference type="Gene3D" id="3.40.720.10">
    <property type="entry name" value="Alkaline Phosphatase, subunit A"/>
    <property type="match status" value="1"/>
</dbReference>
<dbReference type="Gene3D" id="3.40.1450.10">
    <property type="entry name" value="BPG-independent phosphoglycerate mutase, domain B"/>
    <property type="match status" value="1"/>
</dbReference>
<dbReference type="HAMAP" id="MF_01038">
    <property type="entry name" value="GpmI"/>
    <property type="match status" value="1"/>
</dbReference>
<dbReference type="InterPro" id="IPR017850">
    <property type="entry name" value="Alkaline_phosphatase_core_sf"/>
</dbReference>
<dbReference type="InterPro" id="IPR011258">
    <property type="entry name" value="BPG-indep_PGM_N"/>
</dbReference>
<dbReference type="InterPro" id="IPR006124">
    <property type="entry name" value="Metalloenzyme"/>
</dbReference>
<dbReference type="InterPro" id="IPR036646">
    <property type="entry name" value="PGAM_B_sf"/>
</dbReference>
<dbReference type="InterPro" id="IPR005995">
    <property type="entry name" value="Pgm_bpd_ind"/>
</dbReference>
<dbReference type="NCBIfam" id="TIGR01307">
    <property type="entry name" value="pgm_bpd_ind"/>
    <property type="match status" value="1"/>
</dbReference>
<dbReference type="PANTHER" id="PTHR31637">
    <property type="entry name" value="2,3-BISPHOSPHOGLYCERATE-INDEPENDENT PHOSPHOGLYCERATE MUTASE"/>
    <property type="match status" value="1"/>
</dbReference>
<dbReference type="PANTHER" id="PTHR31637:SF0">
    <property type="entry name" value="2,3-BISPHOSPHOGLYCERATE-INDEPENDENT PHOSPHOGLYCERATE MUTASE"/>
    <property type="match status" value="1"/>
</dbReference>
<dbReference type="Pfam" id="PF06415">
    <property type="entry name" value="iPGM_N"/>
    <property type="match status" value="1"/>
</dbReference>
<dbReference type="Pfam" id="PF01676">
    <property type="entry name" value="Metalloenzyme"/>
    <property type="match status" value="1"/>
</dbReference>
<dbReference type="PIRSF" id="PIRSF001492">
    <property type="entry name" value="IPGAM"/>
    <property type="match status" value="1"/>
</dbReference>
<dbReference type="SUPFAM" id="SSF64158">
    <property type="entry name" value="2,3-Bisphosphoglycerate-independent phosphoglycerate mutase, substrate-binding domain"/>
    <property type="match status" value="1"/>
</dbReference>
<dbReference type="SUPFAM" id="SSF53649">
    <property type="entry name" value="Alkaline phosphatase-like"/>
    <property type="match status" value="1"/>
</dbReference>
<accession>Q5QZA9</accession>
<organism>
    <name type="scientific">Idiomarina loihiensis (strain ATCC BAA-735 / DSM 15497 / L2-TR)</name>
    <dbReference type="NCBI Taxonomy" id="283942"/>
    <lineage>
        <taxon>Bacteria</taxon>
        <taxon>Pseudomonadati</taxon>
        <taxon>Pseudomonadota</taxon>
        <taxon>Gammaproteobacteria</taxon>
        <taxon>Alteromonadales</taxon>
        <taxon>Idiomarinaceae</taxon>
        <taxon>Idiomarina</taxon>
    </lineage>
</organism>
<name>GPMI_IDILO</name>
<feature type="chain" id="PRO_0000212156" description="2,3-bisphosphoglycerate-independent phosphoglycerate mutase">
    <location>
        <begin position="1"/>
        <end position="511"/>
    </location>
</feature>
<feature type="active site" description="Phosphoserine intermediate" evidence="1">
    <location>
        <position position="64"/>
    </location>
</feature>
<feature type="binding site" evidence="1">
    <location>
        <position position="14"/>
    </location>
    <ligand>
        <name>Mn(2+)</name>
        <dbReference type="ChEBI" id="CHEBI:29035"/>
        <label>2</label>
    </ligand>
</feature>
<feature type="binding site" evidence="1">
    <location>
        <position position="64"/>
    </location>
    <ligand>
        <name>Mn(2+)</name>
        <dbReference type="ChEBI" id="CHEBI:29035"/>
        <label>2</label>
    </ligand>
</feature>
<feature type="binding site" evidence="1">
    <location>
        <position position="125"/>
    </location>
    <ligand>
        <name>substrate</name>
    </ligand>
</feature>
<feature type="binding site" evidence="1">
    <location>
        <begin position="155"/>
        <end position="156"/>
    </location>
    <ligand>
        <name>substrate</name>
    </ligand>
</feature>
<feature type="binding site" evidence="1">
    <location>
        <position position="187"/>
    </location>
    <ligand>
        <name>substrate</name>
    </ligand>
</feature>
<feature type="binding site" evidence="1">
    <location>
        <position position="193"/>
    </location>
    <ligand>
        <name>substrate</name>
    </ligand>
</feature>
<feature type="binding site" evidence="1">
    <location>
        <begin position="259"/>
        <end position="262"/>
    </location>
    <ligand>
        <name>substrate</name>
    </ligand>
</feature>
<feature type="binding site" evidence="1">
    <location>
        <position position="333"/>
    </location>
    <ligand>
        <name>substrate</name>
    </ligand>
</feature>
<feature type="binding site" evidence="1">
    <location>
        <position position="400"/>
    </location>
    <ligand>
        <name>Mn(2+)</name>
        <dbReference type="ChEBI" id="CHEBI:29035"/>
        <label>1</label>
    </ligand>
</feature>
<feature type="binding site" evidence="1">
    <location>
        <position position="404"/>
    </location>
    <ligand>
        <name>Mn(2+)</name>
        <dbReference type="ChEBI" id="CHEBI:29035"/>
        <label>1</label>
    </ligand>
</feature>
<feature type="binding site" evidence="1">
    <location>
        <position position="441"/>
    </location>
    <ligand>
        <name>Mn(2+)</name>
        <dbReference type="ChEBI" id="CHEBI:29035"/>
        <label>2</label>
    </ligand>
</feature>
<feature type="binding site" evidence="1">
    <location>
        <position position="442"/>
    </location>
    <ligand>
        <name>Mn(2+)</name>
        <dbReference type="ChEBI" id="CHEBI:29035"/>
        <label>2</label>
    </ligand>
</feature>
<feature type="binding site" evidence="1">
    <location>
        <position position="460"/>
    </location>
    <ligand>
        <name>Mn(2+)</name>
        <dbReference type="ChEBI" id="CHEBI:29035"/>
        <label>1</label>
    </ligand>
</feature>